<evidence type="ECO:0000255" key="1">
    <source>
        <dbReference type="HAMAP-Rule" id="MF_00175"/>
    </source>
</evidence>
<evidence type="ECO:0000255" key="2">
    <source>
        <dbReference type="PROSITE-ProRule" id="PRU01250"/>
    </source>
</evidence>
<feature type="chain" id="PRO_1000203733" description="ATP-dependent Clp protease ATP-binding subunit ClpX">
    <location>
        <begin position="1"/>
        <end position="422"/>
    </location>
</feature>
<feature type="domain" description="ClpX-type ZB" evidence="2">
    <location>
        <begin position="1"/>
        <end position="54"/>
    </location>
</feature>
<feature type="binding site" evidence="2">
    <location>
        <position position="13"/>
    </location>
    <ligand>
        <name>Zn(2+)</name>
        <dbReference type="ChEBI" id="CHEBI:29105"/>
    </ligand>
</feature>
<feature type="binding site" evidence="2">
    <location>
        <position position="16"/>
    </location>
    <ligand>
        <name>Zn(2+)</name>
        <dbReference type="ChEBI" id="CHEBI:29105"/>
    </ligand>
</feature>
<feature type="binding site" evidence="2">
    <location>
        <position position="35"/>
    </location>
    <ligand>
        <name>Zn(2+)</name>
        <dbReference type="ChEBI" id="CHEBI:29105"/>
    </ligand>
</feature>
<feature type="binding site" evidence="2">
    <location>
        <position position="38"/>
    </location>
    <ligand>
        <name>Zn(2+)</name>
        <dbReference type="ChEBI" id="CHEBI:29105"/>
    </ligand>
</feature>
<feature type="binding site" evidence="1">
    <location>
        <begin position="117"/>
        <end position="124"/>
    </location>
    <ligand>
        <name>ATP</name>
        <dbReference type="ChEBI" id="CHEBI:30616"/>
    </ligand>
</feature>
<organism>
    <name type="scientific">Exiguobacterium sp. (strain ATCC BAA-1283 / AT1b)</name>
    <dbReference type="NCBI Taxonomy" id="360911"/>
    <lineage>
        <taxon>Bacteria</taxon>
        <taxon>Bacillati</taxon>
        <taxon>Bacillota</taxon>
        <taxon>Bacilli</taxon>
        <taxon>Bacillales</taxon>
        <taxon>Bacillales Family XII. Incertae Sedis</taxon>
        <taxon>Exiguobacterium</taxon>
    </lineage>
</organism>
<name>CLPX_EXISA</name>
<proteinExistence type="inferred from homology"/>
<protein>
    <recommendedName>
        <fullName evidence="1">ATP-dependent Clp protease ATP-binding subunit ClpX</fullName>
    </recommendedName>
</protein>
<accession>C4L4J1</accession>
<gene>
    <name evidence="1" type="primary">clpX</name>
    <name type="ordered locus">EAT1b_2638</name>
</gene>
<reference key="1">
    <citation type="journal article" date="2011" name="J. Bacteriol.">
        <title>Complete genome sequence of the Thermophilic Bacterium Exiguobacterium sp. AT1b.</title>
        <authorList>
            <person name="Vishnivetskaya T.A."/>
            <person name="Lucas S."/>
            <person name="Copeland A."/>
            <person name="Lapidus A."/>
            <person name="Glavina del Rio T."/>
            <person name="Dalin E."/>
            <person name="Tice H."/>
            <person name="Bruce D.C."/>
            <person name="Goodwin L.A."/>
            <person name="Pitluck S."/>
            <person name="Saunders E."/>
            <person name="Brettin T."/>
            <person name="Detter C."/>
            <person name="Han C."/>
            <person name="Larimer F."/>
            <person name="Land M.L."/>
            <person name="Hauser L.J."/>
            <person name="Kyrpides N.C."/>
            <person name="Ovchinnikova G."/>
            <person name="Kathariou S."/>
            <person name="Ramaley R.F."/>
            <person name="Rodrigues D.F."/>
            <person name="Hendrix C."/>
            <person name="Richardson P."/>
            <person name="Tiedje J.M."/>
        </authorList>
    </citation>
    <scope>NUCLEOTIDE SEQUENCE [LARGE SCALE GENOMIC DNA]</scope>
    <source>
        <strain>ATCC BAA-1283 / AT1b</strain>
    </source>
</reference>
<keyword id="KW-0067">ATP-binding</keyword>
<keyword id="KW-0143">Chaperone</keyword>
<keyword id="KW-0479">Metal-binding</keyword>
<keyword id="KW-0547">Nucleotide-binding</keyword>
<keyword id="KW-0862">Zinc</keyword>
<dbReference type="EMBL" id="CP001615">
    <property type="protein sequence ID" value="ACQ71554.1"/>
    <property type="molecule type" value="Genomic_DNA"/>
</dbReference>
<dbReference type="RefSeq" id="WP_015881113.1">
    <property type="nucleotide sequence ID" value="NZ_MOEL01000005.1"/>
</dbReference>
<dbReference type="SMR" id="C4L4J1"/>
<dbReference type="STRING" id="360911.EAT1b_2638"/>
<dbReference type="GeneID" id="94372699"/>
<dbReference type="KEGG" id="eat:EAT1b_2638"/>
<dbReference type="eggNOG" id="COG1219">
    <property type="taxonomic scope" value="Bacteria"/>
</dbReference>
<dbReference type="HOGENOM" id="CLU_014218_8_2_9"/>
<dbReference type="OrthoDB" id="9804062at2"/>
<dbReference type="Proteomes" id="UP000000716">
    <property type="component" value="Chromosome"/>
</dbReference>
<dbReference type="GO" id="GO:0009376">
    <property type="term" value="C:HslUV protease complex"/>
    <property type="evidence" value="ECO:0007669"/>
    <property type="project" value="TreeGrafter"/>
</dbReference>
<dbReference type="GO" id="GO:0005524">
    <property type="term" value="F:ATP binding"/>
    <property type="evidence" value="ECO:0007669"/>
    <property type="project" value="UniProtKB-UniRule"/>
</dbReference>
<dbReference type="GO" id="GO:0016887">
    <property type="term" value="F:ATP hydrolysis activity"/>
    <property type="evidence" value="ECO:0007669"/>
    <property type="project" value="InterPro"/>
</dbReference>
<dbReference type="GO" id="GO:0140662">
    <property type="term" value="F:ATP-dependent protein folding chaperone"/>
    <property type="evidence" value="ECO:0007669"/>
    <property type="project" value="InterPro"/>
</dbReference>
<dbReference type="GO" id="GO:0046983">
    <property type="term" value="F:protein dimerization activity"/>
    <property type="evidence" value="ECO:0007669"/>
    <property type="project" value="InterPro"/>
</dbReference>
<dbReference type="GO" id="GO:0051082">
    <property type="term" value="F:unfolded protein binding"/>
    <property type="evidence" value="ECO:0007669"/>
    <property type="project" value="UniProtKB-UniRule"/>
</dbReference>
<dbReference type="GO" id="GO:0008270">
    <property type="term" value="F:zinc ion binding"/>
    <property type="evidence" value="ECO:0007669"/>
    <property type="project" value="InterPro"/>
</dbReference>
<dbReference type="GO" id="GO:0051301">
    <property type="term" value="P:cell division"/>
    <property type="evidence" value="ECO:0007669"/>
    <property type="project" value="TreeGrafter"/>
</dbReference>
<dbReference type="GO" id="GO:0051603">
    <property type="term" value="P:proteolysis involved in protein catabolic process"/>
    <property type="evidence" value="ECO:0007669"/>
    <property type="project" value="TreeGrafter"/>
</dbReference>
<dbReference type="CDD" id="cd19497">
    <property type="entry name" value="RecA-like_ClpX"/>
    <property type="match status" value="1"/>
</dbReference>
<dbReference type="FunFam" id="1.10.8.60:FF:000002">
    <property type="entry name" value="ATP-dependent Clp protease ATP-binding subunit ClpX"/>
    <property type="match status" value="1"/>
</dbReference>
<dbReference type="FunFam" id="3.40.50.300:FF:000005">
    <property type="entry name" value="ATP-dependent Clp protease ATP-binding subunit ClpX"/>
    <property type="match status" value="1"/>
</dbReference>
<dbReference type="Gene3D" id="1.10.8.60">
    <property type="match status" value="1"/>
</dbReference>
<dbReference type="Gene3D" id="6.20.220.10">
    <property type="entry name" value="ClpX chaperone, C4-type zinc finger domain"/>
    <property type="match status" value="1"/>
</dbReference>
<dbReference type="Gene3D" id="3.40.50.300">
    <property type="entry name" value="P-loop containing nucleotide triphosphate hydrolases"/>
    <property type="match status" value="1"/>
</dbReference>
<dbReference type="HAMAP" id="MF_00175">
    <property type="entry name" value="ClpX"/>
    <property type="match status" value="1"/>
</dbReference>
<dbReference type="InterPro" id="IPR003593">
    <property type="entry name" value="AAA+_ATPase"/>
</dbReference>
<dbReference type="InterPro" id="IPR050052">
    <property type="entry name" value="ATP-dep_Clp_protease_ClpX"/>
</dbReference>
<dbReference type="InterPro" id="IPR003959">
    <property type="entry name" value="ATPase_AAA_core"/>
</dbReference>
<dbReference type="InterPro" id="IPR019489">
    <property type="entry name" value="Clp_ATPase_C"/>
</dbReference>
<dbReference type="InterPro" id="IPR004487">
    <property type="entry name" value="Clp_protease_ATP-bd_su_ClpX"/>
</dbReference>
<dbReference type="InterPro" id="IPR046425">
    <property type="entry name" value="ClpX_bact"/>
</dbReference>
<dbReference type="InterPro" id="IPR027417">
    <property type="entry name" value="P-loop_NTPase"/>
</dbReference>
<dbReference type="InterPro" id="IPR010603">
    <property type="entry name" value="Znf_CppX_C4"/>
</dbReference>
<dbReference type="InterPro" id="IPR038366">
    <property type="entry name" value="Znf_CppX_C4_sf"/>
</dbReference>
<dbReference type="NCBIfam" id="TIGR00382">
    <property type="entry name" value="clpX"/>
    <property type="match status" value="1"/>
</dbReference>
<dbReference type="NCBIfam" id="NF003745">
    <property type="entry name" value="PRK05342.1"/>
    <property type="match status" value="1"/>
</dbReference>
<dbReference type="PANTHER" id="PTHR48102:SF7">
    <property type="entry name" value="ATP-DEPENDENT CLP PROTEASE ATP-BINDING SUBUNIT CLPX-LIKE, MITOCHONDRIAL"/>
    <property type="match status" value="1"/>
</dbReference>
<dbReference type="PANTHER" id="PTHR48102">
    <property type="entry name" value="ATP-DEPENDENT CLP PROTEASE ATP-BINDING SUBUNIT CLPX-LIKE, MITOCHONDRIAL-RELATED"/>
    <property type="match status" value="1"/>
</dbReference>
<dbReference type="Pfam" id="PF07724">
    <property type="entry name" value="AAA_2"/>
    <property type="match status" value="1"/>
</dbReference>
<dbReference type="Pfam" id="PF10431">
    <property type="entry name" value="ClpB_D2-small"/>
    <property type="match status" value="1"/>
</dbReference>
<dbReference type="Pfam" id="PF06689">
    <property type="entry name" value="zf-C4_ClpX"/>
    <property type="match status" value="1"/>
</dbReference>
<dbReference type="SMART" id="SM00382">
    <property type="entry name" value="AAA"/>
    <property type="match status" value="1"/>
</dbReference>
<dbReference type="SMART" id="SM01086">
    <property type="entry name" value="ClpB_D2-small"/>
    <property type="match status" value="1"/>
</dbReference>
<dbReference type="SMART" id="SM00994">
    <property type="entry name" value="zf-C4_ClpX"/>
    <property type="match status" value="1"/>
</dbReference>
<dbReference type="SUPFAM" id="SSF57716">
    <property type="entry name" value="Glucocorticoid receptor-like (DNA-binding domain)"/>
    <property type="match status" value="1"/>
</dbReference>
<dbReference type="SUPFAM" id="SSF52540">
    <property type="entry name" value="P-loop containing nucleoside triphosphate hydrolases"/>
    <property type="match status" value="1"/>
</dbReference>
<dbReference type="PROSITE" id="PS51902">
    <property type="entry name" value="CLPX_ZB"/>
    <property type="match status" value="1"/>
</dbReference>
<comment type="function">
    <text evidence="1">ATP-dependent specificity component of the Clp protease. It directs the protease to specific substrates. Can perform chaperone functions in the absence of ClpP.</text>
</comment>
<comment type="subunit">
    <text evidence="1">Component of the ClpX-ClpP complex. Forms a hexameric ring that, in the presence of ATP, binds to fourteen ClpP subunits assembled into a disk-like structure with a central cavity, resembling the structure of eukaryotic proteasomes.</text>
</comment>
<comment type="similarity">
    <text evidence="1">Belongs to the ClpX chaperone family.</text>
</comment>
<sequence length="422" mass="46743">MFKFNEEKGQLKCSFCGKSQEQVRKLVAGPGVYICDECIELCNEIVEEELGVEEEVEFKDIPKPQEIRNILDDYVIGQDRAKRALSVAVYNHYKRINAGGRSDDVELAKSNIVMIGPTGSGKTLLAQTMARVLNVPFAIADATSLTEAGYVGEDVENILLKLIQSADYDVEKAEKGIIYIDEIDKIARKSENPSITRDVSGEGVQQALLKILEGTTASVPPQGGRKHPHQEFIQIDTTNILFIVGGAFAGIESVVKRRIGKKVIGFGNDQENRELTQEDLLARALPEDLQKFGLIPEFIGRLPVMATLTTLDEEALVEILTKPKNALVRQYEKMLELDDVELTFTDEALIEIAKLAIKRKTGARGLRSIIEEMMLDVMFTVPSRDDIEKVIITDETITGLAGPKYVLRDGTVEQTGDNKETA</sequence>